<name>ISPH_ALIFM</name>
<evidence type="ECO:0000255" key="1">
    <source>
        <dbReference type="HAMAP-Rule" id="MF_00191"/>
    </source>
</evidence>
<accession>B5FA63</accession>
<reference key="1">
    <citation type="submission" date="2008-08" db="EMBL/GenBank/DDBJ databases">
        <title>Complete sequence of Vibrio fischeri strain MJ11.</title>
        <authorList>
            <person name="Mandel M.J."/>
            <person name="Stabb E.V."/>
            <person name="Ruby E.G."/>
            <person name="Ferriera S."/>
            <person name="Johnson J."/>
            <person name="Kravitz S."/>
            <person name="Beeson K."/>
            <person name="Sutton G."/>
            <person name="Rogers Y.-H."/>
            <person name="Friedman R."/>
            <person name="Frazier M."/>
            <person name="Venter J.C."/>
        </authorList>
    </citation>
    <scope>NUCLEOTIDE SEQUENCE [LARGE SCALE GENOMIC DNA]</scope>
    <source>
        <strain>MJ11</strain>
    </source>
</reference>
<gene>
    <name evidence="1" type="primary">ispH</name>
    <name type="ordered locus">VFMJ11_0469</name>
</gene>
<organism>
    <name type="scientific">Aliivibrio fischeri (strain MJ11)</name>
    <name type="common">Vibrio fischeri</name>
    <dbReference type="NCBI Taxonomy" id="388396"/>
    <lineage>
        <taxon>Bacteria</taxon>
        <taxon>Pseudomonadati</taxon>
        <taxon>Pseudomonadota</taxon>
        <taxon>Gammaproteobacteria</taxon>
        <taxon>Vibrionales</taxon>
        <taxon>Vibrionaceae</taxon>
        <taxon>Aliivibrio</taxon>
    </lineage>
</organism>
<protein>
    <recommendedName>
        <fullName evidence="1">4-hydroxy-3-methylbut-2-enyl diphosphate reductase</fullName>
        <shortName evidence="1">HMBPP reductase</shortName>
        <ecNumber evidence="1">1.17.7.4</ecNumber>
    </recommendedName>
</protein>
<feature type="chain" id="PRO_1000098986" description="4-hydroxy-3-methylbut-2-enyl diphosphate reductase">
    <location>
        <begin position="1"/>
        <end position="314"/>
    </location>
</feature>
<feature type="active site" description="Proton donor" evidence="1">
    <location>
        <position position="126"/>
    </location>
</feature>
<feature type="binding site" evidence="1">
    <location>
        <position position="12"/>
    </location>
    <ligand>
        <name>[4Fe-4S] cluster</name>
        <dbReference type="ChEBI" id="CHEBI:49883"/>
    </ligand>
</feature>
<feature type="binding site" evidence="1">
    <location>
        <position position="41"/>
    </location>
    <ligand>
        <name>(2E)-4-hydroxy-3-methylbut-2-enyl diphosphate</name>
        <dbReference type="ChEBI" id="CHEBI:128753"/>
    </ligand>
</feature>
<feature type="binding site" evidence="1">
    <location>
        <position position="41"/>
    </location>
    <ligand>
        <name>dimethylallyl diphosphate</name>
        <dbReference type="ChEBI" id="CHEBI:57623"/>
    </ligand>
</feature>
<feature type="binding site" evidence="1">
    <location>
        <position position="41"/>
    </location>
    <ligand>
        <name>isopentenyl diphosphate</name>
        <dbReference type="ChEBI" id="CHEBI:128769"/>
    </ligand>
</feature>
<feature type="binding site" evidence="1">
    <location>
        <position position="74"/>
    </location>
    <ligand>
        <name>(2E)-4-hydroxy-3-methylbut-2-enyl diphosphate</name>
        <dbReference type="ChEBI" id="CHEBI:128753"/>
    </ligand>
</feature>
<feature type="binding site" evidence="1">
    <location>
        <position position="74"/>
    </location>
    <ligand>
        <name>dimethylallyl diphosphate</name>
        <dbReference type="ChEBI" id="CHEBI:57623"/>
    </ligand>
</feature>
<feature type="binding site" evidence="1">
    <location>
        <position position="74"/>
    </location>
    <ligand>
        <name>isopentenyl diphosphate</name>
        <dbReference type="ChEBI" id="CHEBI:128769"/>
    </ligand>
</feature>
<feature type="binding site" evidence="1">
    <location>
        <position position="96"/>
    </location>
    <ligand>
        <name>[4Fe-4S] cluster</name>
        <dbReference type="ChEBI" id="CHEBI:49883"/>
    </ligand>
</feature>
<feature type="binding site" evidence="1">
    <location>
        <position position="124"/>
    </location>
    <ligand>
        <name>(2E)-4-hydroxy-3-methylbut-2-enyl diphosphate</name>
        <dbReference type="ChEBI" id="CHEBI:128753"/>
    </ligand>
</feature>
<feature type="binding site" evidence="1">
    <location>
        <position position="124"/>
    </location>
    <ligand>
        <name>dimethylallyl diphosphate</name>
        <dbReference type="ChEBI" id="CHEBI:57623"/>
    </ligand>
</feature>
<feature type="binding site" evidence="1">
    <location>
        <position position="124"/>
    </location>
    <ligand>
        <name>isopentenyl diphosphate</name>
        <dbReference type="ChEBI" id="CHEBI:128769"/>
    </ligand>
</feature>
<feature type="binding site" evidence="1">
    <location>
        <position position="167"/>
    </location>
    <ligand>
        <name>(2E)-4-hydroxy-3-methylbut-2-enyl diphosphate</name>
        <dbReference type="ChEBI" id="CHEBI:128753"/>
    </ligand>
</feature>
<feature type="binding site" evidence="1">
    <location>
        <position position="197"/>
    </location>
    <ligand>
        <name>[4Fe-4S] cluster</name>
        <dbReference type="ChEBI" id="CHEBI:49883"/>
    </ligand>
</feature>
<feature type="binding site" evidence="1">
    <location>
        <position position="225"/>
    </location>
    <ligand>
        <name>(2E)-4-hydroxy-3-methylbut-2-enyl diphosphate</name>
        <dbReference type="ChEBI" id="CHEBI:128753"/>
    </ligand>
</feature>
<feature type="binding site" evidence="1">
    <location>
        <position position="225"/>
    </location>
    <ligand>
        <name>dimethylallyl diphosphate</name>
        <dbReference type="ChEBI" id="CHEBI:57623"/>
    </ligand>
</feature>
<feature type="binding site" evidence="1">
    <location>
        <position position="225"/>
    </location>
    <ligand>
        <name>isopentenyl diphosphate</name>
        <dbReference type="ChEBI" id="CHEBI:128769"/>
    </ligand>
</feature>
<feature type="binding site" evidence="1">
    <location>
        <position position="226"/>
    </location>
    <ligand>
        <name>(2E)-4-hydroxy-3-methylbut-2-enyl diphosphate</name>
        <dbReference type="ChEBI" id="CHEBI:128753"/>
    </ligand>
</feature>
<feature type="binding site" evidence="1">
    <location>
        <position position="226"/>
    </location>
    <ligand>
        <name>dimethylallyl diphosphate</name>
        <dbReference type="ChEBI" id="CHEBI:57623"/>
    </ligand>
</feature>
<feature type="binding site" evidence="1">
    <location>
        <position position="226"/>
    </location>
    <ligand>
        <name>isopentenyl diphosphate</name>
        <dbReference type="ChEBI" id="CHEBI:128769"/>
    </ligand>
</feature>
<feature type="binding site" evidence="1">
    <location>
        <position position="227"/>
    </location>
    <ligand>
        <name>(2E)-4-hydroxy-3-methylbut-2-enyl diphosphate</name>
        <dbReference type="ChEBI" id="CHEBI:128753"/>
    </ligand>
</feature>
<feature type="binding site" evidence="1">
    <location>
        <position position="227"/>
    </location>
    <ligand>
        <name>dimethylallyl diphosphate</name>
        <dbReference type="ChEBI" id="CHEBI:57623"/>
    </ligand>
</feature>
<feature type="binding site" evidence="1">
    <location>
        <position position="227"/>
    </location>
    <ligand>
        <name>isopentenyl diphosphate</name>
        <dbReference type="ChEBI" id="CHEBI:128769"/>
    </ligand>
</feature>
<feature type="binding site" evidence="1">
    <location>
        <position position="269"/>
    </location>
    <ligand>
        <name>(2E)-4-hydroxy-3-methylbut-2-enyl diphosphate</name>
        <dbReference type="ChEBI" id="CHEBI:128753"/>
    </ligand>
</feature>
<feature type="binding site" evidence="1">
    <location>
        <position position="269"/>
    </location>
    <ligand>
        <name>dimethylallyl diphosphate</name>
        <dbReference type="ChEBI" id="CHEBI:57623"/>
    </ligand>
</feature>
<feature type="binding site" evidence="1">
    <location>
        <position position="269"/>
    </location>
    <ligand>
        <name>isopentenyl diphosphate</name>
        <dbReference type="ChEBI" id="CHEBI:128769"/>
    </ligand>
</feature>
<sequence>MKIVLANPRGFCAGVDRAISIVERALELYEAPIYVRHEVVHNRFVVEGLKQRGAIFVEELHEVPDDNIVIFSAHGVSQAVRKEAKERALTVFDATCPLVTKVHMEVARASKKNIEVVLIGHAGHPEVEGTMGQYASDSAGMYLVETPDDVIKLNVKDPSNLHYVSQTTLSVDETADVIDELRRVFPDIQGPRKDDICYATQNRQDAVRDMASQVDVMIVVGSKNSSNSNRLRELSEKLGTTSYLIDCPEDLKEEWLTDQAKVGVTAGASAPEELVNQIIEQVKAFGGTAVEELTGREENMFFEVPKELQIKTVS</sequence>
<proteinExistence type="inferred from homology"/>
<keyword id="KW-0004">4Fe-4S</keyword>
<keyword id="KW-0408">Iron</keyword>
<keyword id="KW-0411">Iron-sulfur</keyword>
<keyword id="KW-0414">Isoprene biosynthesis</keyword>
<keyword id="KW-0479">Metal-binding</keyword>
<keyword id="KW-0560">Oxidoreductase</keyword>
<comment type="function">
    <text evidence="1">Catalyzes the conversion of 1-hydroxy-2-methyl-2-(E)-butenyl 4-diphosphate (HMBPP) into a mixture of isopentenyl diphosphate (IPP) and dimethylallyl diphosphate (DMAPP). Acts in the terminal step of the DOXP/MEP pathway for isoprenoid precursor biosynthesis.</text>
</comment>
<comment type="catalytic activity">
    <reaction evidence="1">
        <text>isopentenyl diphosphate + 2 oxidized [2Fe-2S]-[ferredoxin] + H2O = (2E)-4-hydroxy-3-methylbut-2-enyl diphosphate + 2 reduced [2Fe-2S]-[ferredoxin] + 2 H(+)</text>
        <dbReference type="Rhea" id="RHEA:24488"/>
        <dbReference type="Rhea" id="RHEA-COMP:10000"/>
        <dbReference type="Rhea" id="RHEA-COMP:10001"/>
        <dbReference type="ChEBI" id="CHEBI:15377"/>
        <dbReference type="ChEBI" id="CHEBI:15378"/>
        <dbReference type="ChEBI" id="CHEBI:33737"/>
        <dbReference type="ChEBI" id="CHEBI:33738"/>
        <dbReference type="ChEBI" id="CHEBI:128753"/>
        <dbReference type="ChEBI" id="CHEBI:128769"/>
        <dbReference type="EC" id="1.17.7.4"/>
    </reaction>
</comment>
<comment type="catalytic activity">
    <reaction evidence="1">
        <text>dimethylallyl diphosphate + 2 oxidized [2Fe-2S]-[ferredoxin] + H2O = (2E)-4-hydroxy-3-methylbut-2-enyl diphosphate + 2 reduced [2Fe-2S]-[ferredoxin] + 2 H(+)</text>
        <dbReference type="Rhea" id="RHEA:24825"/>
        <dbReference type="Rhea" id="RHEA-COMP:10000"/>
        <dbReference type="Rhea" id="RHEA-COMP:10001"/>
        <dbReference type="ChEBI" id="CHEBI:15377"/>
        <dbReference type="ChEBI" id="CHEBI:15378"/>
        <dbReference type="ChEBI" id="CHEBI:33737"/>
        <dbReference type="ChEBI" id="CHEBI:33738"/>
        <dbReference type="ChEBI" id="CHEBI:57623"/>
        <dbReference type="ChEBI" id="CHEBI:128753"/>
        <dbReference type="EC" id="1.17.7.4"/>
    </reaction>
</comment>
<comment type="cofactor">
    <cofactor evidence="1">
        <name>[4Fe-4S] cluster</name>
        <dbReference type="ChEBI" id="CHEBI:49883"/>
    </cofactor>
    <text evidence="1">Binds 1 [4Fe-4S] cluster per subunit.</text>
</comment>
<comment type="pathway">
    <text evidence="1">Isoprenoid biosynthesis; dimethylallyl diphosphate biosynthesis; dimethylallyl diphosphate from (2E)-4-hydroxy-3-methylbutenyl diphosphate: step 1/1.</text>
</comment>
<comment type="pathway">
    <text evidence="1">Isoprenoid biosynthesis; isopentenyl diphosphate biosynthesis via DXP pathway; isopentenyl diphosphate from 1-deoxy-D-xylulose 5-phosphate: step 6/6.</text>
</comment>
<comment type="similarity">
    <text evidence="1">Belongs to the IspH family.</text>
</comment>
<dbReference type="EC" id="1.17.7.4" evidence="1"/>
<dbReference type="EMBL" id="CP001139">
    <property type="protein sequence ID" value="ACH66699.1"/>
    <property type="molecule type" value="Genomic_DNA"/>
</dbReference>
<dbReference type="RefSeq" id="WP_012533917.1">
    <property type="nucleotide sequence ID" value="NC_011184.1"/>
</dbReference>
<dbReference type="SMR" id="B5FA63"/>
<dbReference type="KEGG" id="vfm:VFMJ11_0469"/>
<dbReference type="HOGENOM" id="CLU_027486_1_1_6"/>
<dbReference type="UniPathway" id="UPA00056">
    <property type="reaction ID" value="UER00097"/>
</dbReference>
<dbReference type="UniPathway" id="UPA00059">
    <property type="reaction ID" value="UER00105"/>
</dbReference>
<dbReference type="Proteomes" id="UP000001857">
    <property type="component" value="Chromosome I"/>
</dbReference>
<dbReference type="GO" id="GO:0051539">
    <property type="term" value="F:4 iron, 4 sulfur cluster binding"/>
    <property type="evidence" value="ECO:0007669"/>
    <property type="project" value="UniProtKB-UniRule"/>
</dbReference>
<dbReference type="GO" id="GO:0051745">
    <property type="term" value="F:4-hydroxy-3-methylbut-2-enyl diphosphate reductase activity"/>
    <property type="evidence" value="ECO:0007669"/>
    <property type="project" value="UniProtKB-UniRule"/>
</dbReference>
<dbReference type="GO" id="GO:0046872">
    <property type="term" value="F:metal ion binding"/>
    <property type="evidence" value="ECO:0007669"/>
    <property type="project" value="UniProtKB-KW"/>
</dbReference>
<dbReference type="GO" id="GO:0050992">
    <property type="term" value="P:dimethylallyl diphosphate biosynthetic process"/>
    <property type="evidence" value="ECO:0007669"/>
    <property type="project" value="UniProtKB-UniRule"/>
</dbReference>
<dbReference type="GO" id="GO:0019288">
    <property type="term" value="P:isopentenyl diphosphate biosynthetic process, methylerythritol 4-phosphate pathway"/>
    <property type="evidence" value="ECO:0007669"/>
    <property type="project" value="UniProtKB-UniRule"/>
</dbReference>
<dbReference type="GO" id="GO:0016114">
    <property type="term" value="P:terpenoid biosynthetic process"/>
    <property type="evidence" value="ECO:0007669"/>
    <property type="project" value="UniProtKB-UniRule"/>
</dbReference>
<dbReference type="CDD" id="cd13944">
    <property type="entry name" value="lytB_ispH"/>
    <property type="match status" value="1"/>
</dbReference>
<dbReference type="Gene3D" id="3.40.50.11270">
    <property type="match status" value="1"/>
</dbReference>
<dbReference type="Gene3D" id="3.40.1010.20">
    <property type="entry name" value="4-hydroxy-3-methylbut-2-enyl diphosphate reductase, catalytic domain"/>
    <property type="match status" value="2"/>
</dbReference>
<dbReference type="HAMAP" id="MF_00191">
    <property type="entry name" value="IspH"/>
    <property type="match status" value="1"/>
</dbReference>
<dbReference type="InterPro" id="IPR003451">
    <property type="entry name" value="LytB/IspH"/>
</dbReference>
<dbReference type="NCBIfam" id="TIGR00216">
    <property type="entry name" value="ispH_lytB"/>
    <property type="match status" value="1"/>
</dbReference>
<dbReference type="NCBIfam" id="NF002188">
    <property type="entry name" value="PRK01045.1-2"/>
    <property type="match status" value="1"/>
</dbReference>
<dbReference type="NCBIfam" id="NF002190">
    <property type="entry name" value="PRK01045.1-4"/>
    <property type="match status" value="1"/>
</dbReference>
<dbReference type="PANTHER" id="PTHR30426">
    <property type="entry name" value="4-HYDROXY-3-METHYLBUT-2-ENYL DIPHOSPHATE REDUCTASE"/>
    <property type="match status" value="1"/>
</dbReference>
<dbReference type="PANTHER" id="PTHR30426:SF0">
    <property type="entry name" value="4-HYDROXY-3-METHYLBUT-2-ENYL DIPHOSPHATE REDUCTASE"/>
    <property type="match status" value="1"/>
</dbReference>
<dbReference type="Pfam" id="PF02401">
    <property type="entry name" value="LYTB"/>
    <property type="match status" value="1"/>
</dbReference>